<name>PSBN_CYAPA</name>
<geneLocation type="cyanelle"/>
<dbReference type="EMBL" id="U30821">
    <property type="protein sequence ID" value="AAA81196.1"/>
    <property type="molecule type" value="Genomic_DNA"/>
</dbReference>
<dbReference type="PIR" id="T06853">
    <property type="entry name" value="T06853"/>
</dbReference>
<dbReference type="RefSeq" id="NP_043165.1">
    <property type="nucleotide sequence ID" value="NC_001675.1"/>
</dbReference>
<dbReference type="SMR" id="P48108"/>
<dbReference type="GeneID" id="801550"/>
<dbReference type="GO" id="GO:0033115">
    <property type="term" value="C:cyanelle thylakoid membrane"/>
    <property type="evidence" value="ECO:0007669"/>
    <property type="project" value="UniProtKB-SubCell"/>
</dbReference>
<dbReference type="GO" id="GO:0015979">
    <property type="term" value="P:photosynthesis"/>
    <property type="evidence" value="ECO:0007669"/>
    <property type="project" value="InterPro"/>
</dbReference>
<dbReference type="HAMAP" id="MF_00293">
    <property type="entry name" value="PSII_PsbN"/>
    <property type="match status" value="1"/>
</dbReference>
<dbReference type="InterPro" id="IPR003398">
    <property type="entry name" value="PSII_PsbN"/>
</dbReference>
<dbReference type="NCBIfam" id="NF009650">
    <property type="entry name" value="PRK13183.1"/>
    <property type="match status" value="1"/>
</dbReference>
<dbReference type="PANTHER" id="PTHR35326">
    <property type="entry name" value="PROTEIN PSBN"/>
    <property type="match status" value="1"/>
</dbReference>
<dbReference type="PANTHER" id="PTHR35326:SF3">
    <property type="entry name" value="PROTEIN PSBN"/>
    <property type="match status" value="1"/>
</dbReference>
<dbReference type="Pfam" id="PF02468">
    <property type="entry name" value="PsbN"/>
    <property type="match status" value="1"/>
</dbReference>
<accession>P48108</accession>
<organism>
    <name type="scientific">Cyanophora paradoxa</name>
    <dbReference type="NCBI Taxonomy" id="2762"/>
    <lineage>
        <taxon>Eukaryota</taxon>
        <taxon>Glaucocystophyceae</taxon>
        <taxon>Cyanophoraceae</taxon>
        <taxon>Cyanophora</taxon>
    </lineage>
</organism>
<sequence length="43" mass="4779">MEISTFLSIFISAALLGITGYSIYTAFGPPSKNLRDPFEEHED</sequence>
<comment type="function">
    <text evidence="1">May play a role in photosystem I and II biogenesis.</text>
</comment>
<comment type="subcellular location">
    <subcellularLocation>
        <location evidence="1">Plastid</location>
        <location evidence="1">Cyanelle thylakoid membrane</location>
        <topology evidence="1">Single-pass membrane protein</topology>
    </subcellularLocation>
</comment>
<comment type="similarity">
    <text evidence="1">Belongs to the PsbN family.</text>
</comment>
<comment type="caution">
    <text evidence="1">Originally thought to be a component of PSII; based on experiments in Synechocystis, N.tabacum and barley, and its absence from PSII in T.elongatus and T.vulcanus, this is probably not true.</text>
</comment>
<evidence type="ECO:0000255" key="1">
    <source>
        <dbReference type="HAMAP-Rule" id="MF_00293"/>
    </source>
</evidence>
<keyword id="KW-0194">Cyanelle</keyword>
<keyword id="KW-0472">Membrane</keyword>
<keyword id="KW-0934">Plastid</keyword>
<keyword id="KW-0793">Thylakoid</keyword>
<keyword id="KW-0812">Transmembrane</keyword>
<keyword id="KW-1133">Transmembrane helix</keyword>
<feature type="chain" id="PRO_0000207893" description="Protein PsbN">
    <location>
        <begin position="1"/>
        <end position="43"/>
    </location>
</feature>
<feature type="transmembrane region" description="Helical" evidence="1">
    <location>
        <begin position="5"/>
        <end position="27"/>
    </location>
</feature>
<reference key="1">
    <citation type="journal article" date="1995" name="Plant Mol. Biol. Rep.">
        <title>Nucleotide sequence of the cyanelle DNA from Cyanophora paradoxa.</title>
        <authorList>
            <person name="Stirewalt V.L."/>
            <person name="Michalowski C.B."/>
            <person name="Loeffelhardt W."/>
            <person name="Bohnert H.J."/>
            <person name="Bryant D.A."/>
        </authorList>
    </citation>
    <scope>NUCLEOTIDE SEQUENCE [LARGE SCALE GENOMIC DNA]</scope>
    <source>
        <strain>UTEX LB 555 / Pringsheim</strain>
    </source>
</reference>
<reference key="2">
    <citation type="book" date="1997" name="Eukaryotism and symbiosis">
        <title>The complete sequence of the cyanelle genome of Cyanophora paradoxa: the genetic complexity of a primitive plastid.</title>
        <editorList>
            <person name="Schenk H.E.A."/>
            <person name="Herrmann R."/>
            <person name="Jeon K.W."/>
            <person name="Mueller N.E."/>
            <person name="Schwemmler W."/>
        </editorList>
        <authorList>
            <person name="Loeffelhardt W."/>
            <person name="Stirewalt V.L."/>
            <person name="Michalowski C.B."/>
            <person name="Annarella M."/>
            <person name="Farley J.Y."/>
            <person name="Schluchter W.M."/>
            <person name="Chung S."/>
            <person name="Newmann-Spallart C."/>
            <person name="Steiner J.M."/>
            <person name="Jakowitsch J."/>
            <person name="Bohnert H.J."/>
            <person name="Bryant D.A."/>
        </authorList>
    </citation>
    <scope>NUCLEOTIDE SEQUENCE [LARGE SCALE GENOMIC DNA]</scope>
    <source>
        <strain>UTEX LB 555 / Pringsheim</strain>
    </source>
</reference>
<gene>
    <name evidence="1" type="primary">psbN</name>
</gene>
<protein>
    <recommendedName>
        <fullName evidence="1">Protein PsbN</fullName>
    </recommendedName>
</protein>
<proteinExistence type="inferred from homology"/>